<accession>A9RA84</accession>
<feature type="chain" id="PRO_0000333885" description="High mobility group protein B1">
    <location>
        <begin position="1"/>
        <end position="215"/>
    </location>
</feature>
<feature type="DNA-binding region" description="HMG box 1" evidence="5">
    <location>
        <begin position="9"/>
        <end position="79"/>
    </location>
</feature>
<feature type="DNA-binding region" description="HMG box 2" evidence="5">
    <location>
        <begin position="95"/>
        <end position="163"/>
    </location>
</feature>
<feature type="region of interest" description="Sufficient for interaction with HAVCR2" evidence="3">
    <location>
        <begin position="1"/>
        <end position="97"/>
    </location>
</feature>
<feature type="region of interest" description="LPS binding (delipidated)" evidence="1">
    <location>
        <begin position="3"/>
        <end position="15"/>
    </location>
</feature>
<feature type="region of interest" description="NLS 1" evidence="4">
    <location>
        <begin position="27"/>
        <end position="43"/>
    </location>
</feature>
<feature type="region of interest" description="Disordered" evidence="6">
    <location>
        <begin position="76"/>
        <end position="95"/>
    </location>
</feature>
<feature type="region of interest" description="LPS binding (Lipid A)" evidence="1">
    <location>
        <begin position="80"/>
        <end position="96"/>
    </location>
</feature>
<feature type="region of interest" description="Cytokine-stimulating activity" evidence="1">
    <location>
        <begin position="89"/>
        <end position="108"/>
    </location>
</feature>
<feature type="region of interest" description="Binding to AGER/RAGE" evidence="4">
    <location>
        <begin position="150"/>
        <end position="183"/>
    </location>
</feature>
<feature type="region of interest" description="Disordered" evidence="6">
    <location>
        <begin position="161"/>
        <end position="215"/>
    </location>
</feature>
<feature type="region of interest" description="NLS 2" evidence="4">
    <location>
        <begin position="178"/>
        <end position="184"/>
    </location>
</feature>
<feature type="short sequence motif" description="Nuclear localization signal (NLS) 1" evidence="4">
    <location>
        <begin position="27"/>
        <end position="43"/>
    </location>
</feature>
<feature type="short sequence motif" description="Nuclear localization signal (NLS) 2" evidence="4">
    <location>
        <begin position="178"/>
        <end position="184"/>
    </location>
</feature>
<feature type="compositionally biased region" description="Basic and acidic residues" evidence="6">
    <location>
        <begin position="83"/>
        <end position="94"/>
    </location>
</feature>
<feature type="compositionally biased region" description="Basic and acidic residues" evidence="6">
    <location>
        <begin position="161"/>
        <end position="179"/>
    </location>
</feature>
<feature type="compositionally biased region" description="Acidic residues" evidence="6">
    <location>
        <begin position="187"/>
        <end position="215"/>
    </location>
</feature>
<feature type="binding site" evidence="2">
    <location>
        <begin position="1"/>
        <end position="10"/>
    </location>
    <ligand>
        <name>heparin</name>
        <dbReference type="ChEBI" id="CHEBI:28304"/>
    </ligand>
</feature>
<feature type="site" description="Cleavage; by thrombin:thrombomodulin" evidence="2">
    <location>
        <begin position="10"/>
        <end position="11"/>
    </location>
</feature>
<feature type="site" description="Cleavage; by CASP1" evidence="1">
    <location>
        <begin position="67"/>
        <end position="68"/>
    </location>
</feature>
<feature type="modified residue" description="N6-acetyllysine" evidence="2">
    <location>
        <position position="3"/>
    </location>
</feature>
<feature type="modified residue" description="N6-acetyllysine" evidence="2">
    <location>
        <position position="7"/>
    </location>
</feature>
<feature type="modified residue" description="N6-acetyllysine" evidence="2">
    <location>
        <position position="8"/>
    </location>
</feature>
<feature type="modified residue" description="N6-acetyllysine" evidence="2">
    <location>
        <position position="12"/>
    </location>
</feature>
<feature type="modified residue" description="Cysteine sulfonic acid (-SO3H); alternate" evidence="4">
    <location>
        <position position="23"/>
    </location>
</feature>
<feature type="modified residue" description="N6-acetyllysine" evidence="2">
    <location>
        <position position="28"/>
    </location>
</feature>
<feature type="modified residue" description="N6-acetyllysine" evidence="2">
    <location>
        <position position="29"/>
    </location>
</feature>
<feature type="modified residue" description="N6-acetyllysine" evidence="2">
    <location>
        <position position="30"/>
    </location>
</feature>
<feature type="modified residue" description="Phosphoserine" evidence="1">
    <location>
        <position position="35"/>
    </location>
</feature>
<feature type="modified residue" description="N6-acetyllysine" evidence="3">
    <location>
        <position position="43"/>
    </location>
</feature>
<feature type="modified residue" description="Cysteine sulfonic acid (-SO3H); alternate" evidence="4">
    <location>
        <position position="45"/>
    </location>
</feature>
<feature type="modified residue" description="N6-acetyllysine" evidence="3">
    <location>
        <position position="90"/>
    </location>
</feature>
<feature type="modified residue" description="Phosphoserine" evidence="1">
    <location>
        <position position="100"/>
    </location>
</feature>
<feature type="modified residue" description="Cysteine sulfonic acid (-SO3H)" evidence="4">
    <location>
        <position position="106"/>
    </location>
</feature>
<feature type="modified residue" description="N6-acetyllysine" evidence="2">
    <location>
        <position position="127"/>
    </location>
</feature>
<feature type="modified residue" description="N6-acetyllysine" evidence="2">
    <location>
        <position position="128"/>
    </location>
</feature>
<feature type="modified residue" description="N6-acetyllysine" evidence="3">
    <location>
        <position position="141"/>
    </location>
</feature>
<feature type="modified residue" description="N6-acetyllysine" evidence="2">
    <location>
        <position position="172"/>
    </location>
</feature>
<feature type="modified residue" description="N6-acetyllysine" evidence="2">
    <location>
        <position position="173"/>
    </location>
</feature>
<feature type="modified residue" description="N6-acetyllysine" evidence="2">
    <location>
        <position position="177"/>
    </location>
</feature>
<feature type="modified residue" description="N6-acetyllysine" evidence="2">
    <location>
        <position position="180"/>
    </location>
</feature>
<feature type="modified residue" description="ADP-ribosylserine" evidence="1">
    <location>
        <position position="181"/>
    </location>
</feature>
<feature type="modified residue" description="N6-acetyllysine" evidence="2">
    <location>
        <position position="182"/>
    </location>
</feature>
<feature type="modified residue" description="N6-acetyllysine" evidence="2">
    <location>
        <position position="183"/>
    </location>
</feature>
<feature type="modified residue" description="N6-acetyllysine" evidence="2">
    <location>
        <position position="184"/>
    </location>
</feature>
<feature type="modified residue" description="N6-acetyllysine" evidence="2">
    <location>
        <position position="185"/>
    </location>
</feature>
<feature type="disulfide bond" description="In disulfide HMGB1; alternate" evidence="4">
    <location>
        <begin position="23"/>
        <end position="45"/>
    </location>
</feature>
<feature type="cross-link" description="Isoglutamyl lysine isopeptide (Lys-Gln) (interchain with Q-?)" evidence="1">
    <location>
        <position position="28"/>
    </location>
</feature>
<feature type="cross-link" description="Isoglutamyl lysine isopeptide (Lys-Gln) (interchain with Q-?)" evidence="1">
    <location>
        <position position="43"/>
    </location>
</feature>
<feature type="cross-link" description="Isoglutamyl lysine isopeptide (Lys-Gln) (interchain with Q-?)" evidence="1">
    <location>
        <position position="44"/>
    </location>
</feature>
<feature type="cross-link" description="Isoglutamyl lysine isopeptide (Lys-Gln) (interchain with Q-?)" evidence="1">
    <location>
        <position position="68"/>
    </location>
</feature>
<feature type="cross-link" description="Isoglutamyl lysine isopeptide (Lys-Gln) (interchain with Q-?)" evidence="1">
    <location>
        <position position="180"/>
    </location>
</feature>
<feature type="cross-link" description="Isoglutamyl lysine isopeptide (Lys-Gln) (interchain with Q-?)" evidence="1">
    <location>
        <position position="182"/>
    </location>
</feature>
<feature type="cross-link" description="Isoglutamyl lysine isopeptide (Lys-Gln) (interchain with Q-?)" evidence="1">
    <location>
        <position position="183"/>
    </location>
</feature>
<feature type="cross-link" description="Isoglutamyl lysine isopeptide (Lys-Gln) (interchain with Q-?)" evidence="1">
    <location>
        <position position="184"/>
    </location>
</feature>
<organism>
    <name type="scientific">Papio anubis</name>
    <name type="common">Olive baboon</name>
    <dbReference type="NCBI Taxonomy" id="9555"/>
    <lineage>
        <taxon>Eukaryota</taxon>
        <taxon>Metazoa</taxon>
        <taxon>Chordata</taxon>
        <taxon>Craniata</taxon>
        <taxon>Vertebrata</taxon>
        <taxon>Euteleostomi</taxon>
        <taxon>Mammalia</taxon>
        <taxon>Eutheria</taxon>
        <taxon>Euarchontoglires</taxon>
        <taxon>Primates</taxon>
        <taxon>Haplorrhini</taxon>
        <taxon>Catarrhini</taxon>
        <taxon>Cercopithecidae</taxon>
        <taxon>Cercopithecinae</taxon>
        <taxon>Papio</taxon>
    </lineage>
</organism>
<comment type="function">
    <text evidence="1 2 4">Multifunctional redox sensitive protein with various roles in different cellular compartments. In the nucleus is one of the major chromatin-associated non-histone proteins and acts as a DNA chaperone involved in replication, transcription, chromatin remodeling, V(D)J recombination, DNA repair and genome stability. Proposed to be an universal biosensor for nucleic acids. Promotes host inflammatory response to sterile and infectious signals and is involved in the coordination and integration of innate and adaptive immune responses. In the cytoplasm functions as a sensor and/or chaperone for immunogenic nucleic acids implicating the activation of TLR9-mediated immune responses, and mediates autophagy. Acts as a danger-associated molecular pattern (DAMP) molecule that amplifies immune responses during tissue injury. Released to the extracellular environment can bind DNA, nucleosomes, IL-1 beta, CXCL12, AGER isoform 2/sRAGE, lipopolysaccharide (LPS) and lipoteichoic acid (LTA), and activates cells through engagement of multiple surface receptors. In the extracellular compartment fully reduced HMGB1 (released by necrosis) acts as a chemokine, disulfide HMGB1 (actively secreted) as a cytokine, and sulfonyl HMGB1 (released from apoptotic cells) promotes immunological tolerance. Has proangiogenic activity. May be involved in platelet activation. Binds to phosphatidylserine and phosphatidylethanolamide. Bound to RAGE mediates signaling for neuronal outgrowth. May play a role in accumulation of expanded polyglutamine (polyQ) proteins.</text>
</comment>
<comment type="function">
    <text evidence="1 2 3 4">Nuclear functions are attributed to fully reduced HGMB1. Associates with chromatin and binds DNA with a preference to non-canonical DNA structures such as single-stranded DNA, DNA-containing cruciforms or bent structures, supercoiled DNA and ZDNA. Can bent DNA and enhance DNA flexibility by looping thus providing a mechanism to promote activities on various gene promoters by enhancing transcription factor binding and/or bringing distant regulatory sequences into close proximity. May be involved in nucleotide excision repair (NER), mismatch repair (MMR) and base excision repair (BER) pathways, and double strand break repair such as non-homologous end joining (NHEJ). Involved in V(D)J recombination by acting as a cofactor of the RAG complex: acts by stimulating cleavage and RAG protein binding at the 23 bp spacer of conserved recombination signal sequences (RSS). In vitro can displace histone H1 from highly bent DNA. Can restructure the canonical nucleosome leading to relaxation of structural constraints for transcription factor-binding. Enhances binding of sterol regulatory element-binding proteins (SREBPs) such as SREBF1 to their cognate DNA sequences and increases their transcriptional activities. Facilitates binding of TP53 to DNA. May be involved in mitochondrial quality control and autophagy in a transcription-dependent fashion implicating HSPB1. Can modulate the activity of the telomerase complex and may be involved in telomere maintenance.</text>
</comment>
<comment type="function">
    <text evidence="1 3">In the cytoplasm proposed to dissociate the BECN1:BCL2 complex via competitive interaction with BECN1 leading to autophagy activation. Can protect BECN1 and ATG5 from calpain-mediated cleavage and thus proposed to control their proautophagic and proapoptotic functions and to regulate the extent and severity of inflammation-associated cellular injury. In myeloid cells has a protective role against endotoxemia and bacterial infection by promoting autophagy. Involved in endosomal translocation and activation of TLR9 in response to CpG-DNA in macrophages.</text>
</comment>
<comment type="function">
    <text evidence="1 2 3 4">In the extracellular compartment (following either active secretion or passive release) involved in regulation of the inflammatory response. Fully reduced HGMB1 (which subsequently gets oxidized after release) in association with CXCL12 mediates the recruitment of inflammatory cells during the initial phase of tissue injury; the CXCL12:HMGB1 complex triggers CXCR4 homodimerization. Induces the migration of monocyte-derived immature dendritic cells and seems to regulate adhesive and migratory functions of neutrophils implicating AGER/RAGE and ITGAM. Can bind to various types of DNA and RNA including microbial unmethylated CpG-DNA to enhance the innate immune response to nucleic acids. Proposed to act in promiscuous DNA/RNA sensing which cooperates with subsequent discriminative sensing by specific pattern recognition receptors. Promotes extracellular DNA-induced AIM2 inflammasome activation implicating AGER/RAGE. Disulfide HMGB1 binds to transmembrane receptors, such as AGER/RAGE, TLR2, TLR4 and probably TREM1, thus activating their signal transduction pathways. Mediates the release of cytokines/chemokines such as TNF, IL-1, IL-6, IL-8, CCL2, CCL3, CCL4 and CXCL10. Promotes secretion of interferon-gamma by macrophage-stimulated natural killer (NK) cells in concert with other cytokines like IL-2 or IL-12. TLR4 is proposed to be the primary receptor promoting macrophage activation and signaling through TLR4 seems to implicate LY96/MD-2. In bacterial LPS- or LTA-mediated inflammatory responses binds to the endotoxins and transfers them to CD14 for signaling to the respective TLR4:LY96 and TLR2 complexes. Contributes to tumor proliferation by association with ACER/RAGE. Can bind to IL1-beta and signals through the IL1R1:IL1RAP receptor complex. Binding to class A CpG activates cytokine production in plasmacytoid dendritic cells implicating TLR9, MYD88 and AGER/RAGE and can activate autoreactive B cells. Via HMGB1-containing chromatin immune complexes may also promote B cell responses to endogenous TLR9 ligands through a B-cell receptor (BCR)-dependent and ACER/RAGE-independent mechanism. Inhibits phagocytosis of apoptotic cells by macrophages; the function is dependent on poly-ADP-ribosylation and involves binding to phosphatidylserine on the cell surface of apoptotic cells. In adaptive immunity may be involved in enhancing immunity through activation of effector T-cells and suppression of regulatory T (TReg) cells. In contrast, without implicating effector or regulatory T-cells, required for tumor infiltration and activation of T-cells expressing the lymphotoxin LTA:LTB heterotrimer thus promoting tumor malignant progression. Also reported to limit proliferation of T-cells. Released HMGB1:nucleosome complexes formed during apoptosis can signal through TLR2 to induce cytokine production. Involved in induction of immunological tolerance by apoptotic cells; its pro-inflammatory activities when released by apoptotic cells are neutralized by reactive oxygen species (ROS)-dependent oxidation specifically on Cys-106. During macrophage activation by activated lymphocyte-derived self apoptotic DNA (ALD-DNA) promotes recruitment of ALD-DNA to endosomes.</text>
</comment>
<comment type="subunit">
    <text evidence="1 3 4">Interacts (fully reduced HMGB1) with CXCL12; probably in a 1:2 ratio involving two molecules of CXCL12, each interacting with one HMG box of HMGB1; inhibited by Glycyrrhizin. Associates with the TLR4:LY96 receptor complex. Component of the RAG complex composed of core components RAG1 and RAG2, and associated component HMGB1 or HMGB2. Interacts (in cytoplasm upon starvation) with BECN1; inhibits the interaction of BECN1 and BCL2 leading to promotion of autophagy. Interacts with KPNA1; involved in nuclear import. Interacts with SREBF1, TLR2, TLR4, TLR9, PTPRZ1, APEX1, FEN1, POLB, TERT. Interacts with IL1B, AGER, MSH2, XPA, XPC, HNF1A, TP53. Interacts with CD24; the probable CD24:SIGLEC10 complex is proposed to inhibit HGMB1-mediated tissue damage immune response. Interacts with THBD; prevents HGMB1 interaction with ACER/RAGE and inhibits HGMB1 pro-inflammatory activity. Interacts with HAVCR2; impairs HMGB1 binding to B-DNA and likely HMGB1-mediated innate immune response. Interacts with XPO1; mediating nuclear export. Interacts with receptor RAGE/AGER (By similarity).</text>
</comment>
<comment type="subcellular location">
    <subcellularLocation>
        <location evidence="1">Nucleus</location>
    </subcellularLocation>
    <subcellularLocation>
        <location evidence="2 4">Chromosome</location>
    </subcellularLocation>
    <subcellularLocation>
        <location evidence="1">Cytoplasm</location>
    </subcellularLocation>
    <subcellularLocation>
        <location evidence="1 3">Secreted</location>
    </subcellularLocation>
    <subcellularLocation>
        <location evidence="1 3 4">Cell membrane</location>
        <topology evidence="1 3 4">Peripheral membrane protein</topology>
        <orientation evidence="1 3 4">Extracellular side</orientation>
    </subcellularLocation>
    <subcellularLocation>
        <location evidence="3">Endosome</location>
    </subcellularLocation>
    <subcellularLocation>
        <location evidence="3">Endoplasmic reticulum-Golgi intermediate compartment</location>
    </subcellularLocation>
    <text evidence="1 3">In basal state predominantly nuclear. Shuttles between the cytoplasm and the nucleus. Translocates from the nucleus to the cytoplasm upon autophagy stimulation. Release from macrophages in the extracellular milieu requires the activation of NLRC4 or NLRP3 inflammasomes (By similarity). Passively released to the extracellular milieu from necrotic cells by diffusion, involving the fully reduced HGMB1 which subsequently gets oxidized. Also released from apoptotic cells. Active secretion from a variety of immune and non-immune cells such as macrophages, monocytes, neutrophils, dendritic cells, natural killer cells and plasma cells in response to various stimuli such as LPS and cytokines involves a nonconventional secretory process via secretory lysosomes. Found on the surface of activated platelets.</text>
</comment>
<comment type="domain">
    <text evidence="1">HMG box 2 mediates pro-inflammatory cytokine-stimulating activity and binding to TLR4. However, not involved in mediating immunogenic activity in the context of apoptosis-induced immune tolerance.</text>
</comment>
<comment type="domain">
    <text evidence="1 4">The acidic C-terminal domain forms a flexible structure which can reversibly interact intramolecularily with the HMG boxes and modulate binding to DNA and other proteins.</text>
</comment>
<comment type="PTM">
    <text evidence="1">Phosphorylated at serine residues. Phosphorylation in both NLS regions is required for cytoplasmic translocation followed by secretion.</text>
</comment>
<comment type="PTM">
    <text evidence="1 2 4">Acetylated on multiple sites upon stimulation with LPS (By similarity). Acetylation on lysine residues in the nuclear localization signals (NLS 1 and NLS 2) leads to cytoplasmic localization and subsequent secretion. Acetylation on Lys-3 results in preferential binding to DNA ends and impairs DNA bending activity (By similarity).</text>
</comment>
<comment type="PTM">
    <text evidence="1">Reduction/oxidation of cysteine residues Cys-23, Cys-45 and Cys-106 and a possible intramolecular disulfide bond involving Cys-23 and Cys-45 give rise to different redox forms with specific functional activities in various cellular compartments: 1- fully reduced HMGB1 (HMGB1C23hC45hC106h), 2- disulfide HMGB1 (HMGB1C23-C45C106h) and 3- sulfonyl HMGB1 (HMGB1C23soC45soC106so).</text>
</comment>
<comment type="PTM">
    <text evidence="3">Poly-ADP-ribosylated by PARP1 when secreted following stimulation with LPS (By similarity).</text>
</comment>
<comment type="PTM">
    <text evidence="1 2">In vitro cleavage by CASP1 is liberating a HMG box 1-containing peptide which may mediate immunogenic activity; the peptide antagonizes apoptosis-induced immune tolerance. Can be proteolytically cleaved by a thrombin:thrombomodulin complex; reduces binding to heparin and pro-inflammatory activities (By similarity).</text>
</comment>
<comment type="PTM">
    <text evidence="1">Forms covalent cross-links mediated by transglutaminase TGM2, between a glutamine and the epsilon-amino group of a lysine residue, forming homopolymers and heteropolymers.</text>
</comment>
<comment type="similarity">
    <text evidence="7">Belongs to the HMGB family.</text>
</comment>
<evidence type="ECO:0000250" key="1">
    <source>
        <dbReference type="UniProtKB" id="P09429"/>
    </source>
</evidence>
<evidence type="ECO:0000250" key="2">
    <source>
        <dbReference type="UniProtKB" id="P10103"/>
    </source>
</evidence>
<evidence type="ECO:0000250" key="3">
    <source>
        <dbReference type="UniProtKB" id="P63158"/>
    </source>
</evidence>
<evidence type="ECO:0000250" key="4">
    <source>
        <dbReference type="UniProtKB" id="P63159"/>
    </source>
</evidence>
<evidence type="ECO:0000255" key="5">
    <source>
        <dbReference type="PROSITE-ProRule" id="PRU00267"/>
    </source>
</evidence>
<evidence type="ECO:0000256" key="6">
    <source>
        <dbReference type="SAM" id="MobiDB-lite"/>
    </source>
</evidence>
<evidence type="ECO:0000305" key="7"/>
<protein>
    <recommendedName>
        <fullName>High mobility group protein B1</fullName>
    </recommendedName>
    <alternativeName>
        <fullName>High mobility group protein 1</fullName>
        <shortName>HMG-1</shortName>
    </alternativeName>
</protein>
<name>HMGB1_PAPAN</name>
<sequence>MGKGDPKKPRGKMSSYAFFVQTCREEHKKKHPDASVNFSEFSKKCSERWKTMSAKEKGKFEDMAKADKARYEREMKTYIPPKGETKKKFKDPNAPKRPPSAFFLFCSEYRPKIKGEHPGLSIGDVAKKLGEMWNNTAADDKQPYEKKAAKLKEKYEKDIAAYRAKGKPDAAKKGVVKAEKSKKKKEEEEDEEDEEDEEEEEDEEDEDEEEDDDDE</sequence>
<gene>
    <name type="primary">HMGB1</name>
</gene>
<reference key="1">
    <citation type="submission" date="2007-12" db="EMBL/GenBank/DDBJ databases">
        <title>NISC comparative sequencing initiative.</title>
        <authorList>
            <person name="Antonellis A."/>
            <person name="Benjamin B."/>
            <person name="Blakesley R.W."/>
            <person name="Bouffard G.G."/>
            <person name="Brinkley C."/>
            <person name="Brooks S."/>
            <person name="Chu G."/>
            <person name="Chub I."/>
            <person name="Coleman H."/>
            <person name="Fuksenko T."/>
            <person name="Gestole M."/>
            <person name="Gregory M."/>
            <person name="Guan X."/>
            <person name="Gupta J."/>
            <person name="Gurson N."/>
            <person name="Han E."/>
            <person name="Han J."/>
            <person name="Hansen N."/>
            <person name="Hargrove A."/>
            <person name="Hines-Harris K."/>
            <person name="Ho S.-L."/>
            <person name="Hu P."/>
            <person name="Hunter G."/>
            <person name="Hurle B."/>
            <person name="Idol J.R."/>
            <person name="Johnson T."/>
            <person name="Knight E."/>
            <person name="Kwong P."/>
            <person name="Lee-Lin S.-Q."/>
            <person name="Legaspi R."/>
            <person name="Madden M."/>
            <person name="Maduro Q.L."/>
            <person name="Maduro V.B."/>
            <person name="Margulies E.H."/>
            <person name="Masiello C."/>
            <person name="Maskeri B."/>
            <person name="McDowell J."/>
            <person name="Merkulov G."/>
            <person name="Montemayor C."/>
            <person name="Mullikin J.C."/>
            <person name="Park M."/>
            <person name="Prasad A."/>
            <person name="Ramsahoye C."/>
            <person name="Reddix-Dugue N."/>
            <person name="Riebow N."/>
            <person name="Schandler K."/>
            <person name="Schueler M.G."/>
            <person name="Sison C."/>
            <person name="Smith L."/>
            <person name="Stantripop S."/>
            <person name="Thomas J.W."/>
            <person name="Thomas P.J."/>
            <person name="Tsipouri V."/>
            <person name="Young A."/>
            <person name="Green E.D."/>
        </authorList>
    </citation>
    <scope>NUCLEOTIDE SEQUENCE [LARGE SCALE MRNA]</scope>
</reference>
<dbReference type="EMBL" id="DP000511">
    <property type="protein sequence ID" value="ABX89266.1"/>
    <property type="molecule type" value="Genomic_DNA"/>
</dbReference>
<dbReference type="RefSeq" id="NP_001162380.1">
    <property type="nucleotide sequence ID" value="NM_001168909.1"/>
</dbReference>
<dbReference type="RefSeq" id="XP_009189984.1">
    <property type="nucleotide sequence ID" value="XM_009191720.1"/>
</dbReference>
<dbReference type="RefSeq" id="XP_009189985.1">
    <property type="nucleotide sequence ID" value="XM_009191721.2"/>
</dbReference>
<dbReference type="RefSeq" id="XP_009189986.1">
    <property type="nucleotide sequence ID" value="XM_009191722.1"/>
</dbReference>
<dbReference type="BMRB" id="A9RA84"/>
<dbReference type="SMR" id="A9RA84"/>
<dbReference type="STRING" id="9555.ENSPANP00000006640"/>
<dbReference type="Ensembl" id="ENSPANT00000005593.3">
    <property type="protein sequence ID" value="ENSPANP00000013674.3"/>
    <property type="gene ID" value="ENSPANG00000011105.3"/>
</dbReference>
<dbReference type="GeneID" id="100137373"/>
<dbReference type="KEGG" id="panu:100137373"/>
<dbReference type="CTD" id="3146"/>
<dbReference type="eggNOG" id="KOG0381">
    <property type="taxonomic scope" value="Eukaryota"/>
</dbReference>
<dbReference type="GeneTree" id="ENSGT00950000183120"/>
<dbReference type="HOGENOM" id="CLU_082854_0_0_1"/>
<dbReference type="OrthoDB" id="15086at314294"/>
<dbReference type="Proteomes" id="UP000028761">
    <property type="component" value="Chromosome 6"/>
</dbReference>
<dbReference type="Bgee" id="ENSPANG00000007200">
    <property type="expression patterns" value="Expressed in duodenum and 66 other cell types or tissues"/>
</dbReference>
<dbReference type="ExpressionAtlas" id="A9RA84">
    <property type="expression patterns" value="baseline"/>
</dbReference>
<dbReference type="GO" id="GO:0005694">
    <property type="term" value="C:chromosome"/>
    <property type="evidence" value="ECO:0007669"/>
    <property type="project" value="UniProtKB-SubCell"/>
</dbReference>
<dbReference type="GO" id="GO:0005793">
    <property type="term" value="C:endoplasmic reticulum-Golgi intermediate compartment"/>
    <property type="evidence" value="ECO:0007669"/>
    <property type="project" value="UniProtKB-SubCell"/>
</dbReference>
<dbReference type="GO" id="GO:0005768">
    <property type="term" value="C:endosome"/>
    <property type="evidence" value="ECO:0007669"/>
    <property type="project" value="UniProtKB-SubCell"/>
</dbReference>
<dbReference type="GO" id="GO:0005576">
    <property type="term" value="C:extracellular region"/>
    <property type="evidence" value="ECO:0007669"/>
    <property type="project" value="UniProtKB-SubCell"/>
</dbReference>
<dbReference type="GO" id="GO:0005634">
    <property type="term" value="C:nucleus"/>
    <property type="evidence" value="ECO:0007669"/>
    <property type="project" value="UniProtKB-SubCell"/>
</dbReference>
<dbReference type="GO" id="GO:0005886">
    <property type="term" value="C:plasma membrane"/>
    <property type="evidence" value="ECO:0007669"/>
    <property type="project" value="UniProtKB-SubCell"/>
</dbReference>
<dbReference type="GO" id="GO:0000405">
    <property type="term" value="F:bubble DNA binding"/>
    <property type="evidence" value="ECO:0000250"/>
    <property type="project" value="AgBase"/>
</dbReference>
<dbReference type="GO" id="GO:0008301">
    <property type="term" value="F:DNA binding, bending"/>
    <property type="evidence" value="ECO:0000250"/>
    <property type="project" value="AgBase"/>
</dbReference>
<dbReference type="GO" id="GO:0000400">
    <property type="term" value="F:four-way junction DNA binding"/>
    <property type="evidence" value="ECO:0000250"/>
    <property type="project" value="AgBase"/>
</dbReference>
<dbReference type="GO" id="GO:0097100">
    <property type="term" value="F:supercoiled DNA binding"/>
    <property type="evidence" value="ECO:0000250"/>
    <property type="project" value="AgBase"/>
</dbReference>
<dbReference type="GO" id="GO:0002250">
    <property type="term" value="P:adaptive immune response"/>
    <property type="evidence" value="ECO:0007669"/>
    <property type="project" value="UniProtKB-KW"/>
</dbReference>
<dbReference type="GO" id="GO:0006914">
    <property type="term" value="P:autophagy"/>
    <property type="evidence" value="ECO:0007669"/>
    <property type="project" value="UniProtKB-KW"/>
</dbReference>
<dbReference type="GO" id="GO:0006935">
    <property type="term" value="P:chemotaxis"/>
    <property type="evidence" value="ECO:0007669"/>
    <property type="project" value="UniProtKB-KW"/>
</dbReference>
<dbReference type="GO" id="GO:0032392">
    <property type="term" value="P:DNA geometric change"/>
    <property type="evidence" value="ECO:0000250"/>
    <property type="project" value="AgBase"/>
</dbReference>
<dbReference type="GO" id="GO:0006310">
    <property type="term" value="P:DNA recombination"/>
    <property type="evidence" value="ECO:0007669"/>
    <property type="project" value="UniProtKB-KW"/>
</dbReference>
<dbReference type="GO" id="GO:0006281">
    <property type="term" value="P:DNA repair"/>
    <property type="evidence" value="ECO:0007669"/>
    <property type="project" value="UniProtKB-KW"/>
</dbReference>
<dbReference type="GO" id="GO:0006954">
    <property type="term" value="P:inflammatory response"/>
    <property type="evidence" value="ECO:0007669"/>
    <property type="project" value="UniProtKB-KW"/>
</dbReference>
<dbReference type="GO" id="GO:0045087">
    <property type="term" value="P:innate immune response"/>
    <property type="evidence" value="ECO:0007669"/>
    <property type="project" value="UniProtKB-KW"/>
</dbReference>
<dbReference type="GO" id="GO:0006357">
    <property type="term" value="P:regulation of transcription by RNA polymerase II"/>
    <property type="evidence" value="ECO:0007669"/>
    <property type="project" value="TreeGrafter"/>
</dbReference>
<dbReference type="CDD" id="cd21978">
    <property type="entry name" value="HMG-box_HMGB_rpt1"/>
    <property type="match status" value="1"/>
</dbReference>
<dbReference type="CDD" id="cd21979">
    <property type="entry name" value="HMG-box_HMGB_rpt2"/>
    <property type="match status" value="1"/>
</dbReference>
<dbReference type="FunFam" id="1.10.30.10:FF:000006">
    <property type="entry name" value="High mobility group protein B1"/>
    <property type="match status" value="1"/>
</dbReference>
<dbReference type="FunFam" id="1.10.30.10:FF:000015">
    <property type="entry name" value="high mobility group protein B1"/>
    <property type="match status" value="1"/>
</dbReference>
<dbReference type="Gene3D" id="1.10.30.10">
    <property type="entry name" value="High mobility group box domain"/>
    <property type="match status" value="2"/>
</dbReference>
<dbReference type="InterPro" id="IPR009071">
    <property type="entry name" value="HMG_box_dom"/>
</dbReference>
<dbReference type="InterPro" id="IPR036910">
    <property type="entry name" value="HMG_box_dom_sf"/>
</dbReference>
<dbReference type="InterPro" id="IPR017967">
    <property type="entry name" value="HMG_boxA_CS"/>
</dbReference>
<dbReference type="InterPro" id="IPR050342">
    <property type="entry name" value="HMGB"/>
</dbReference>
<dbReference type="PANTHER" id="PTHR48112:SF35">
    <property type="entry name" value="HIGH MOBILITY GROUP PROTEIN B1"/>
    <property type="match status" value="1"/>
</dbReference>
<dbReference type="PANTHER" id="PTHR48112">
    <property type="entry name" value="HIGH MOBILITY GROUP PROTEIN DSP1"/>
    <property type="match status" value="1"/>
</dbReference>
<dbReference type="Pfam" id="PF00505">
    <property type="entry name" value="HMG_box"/>
    <property type="match status" value="1"/>
</dbReference>
<dbReference type="Pfam" id="PF09011">
    <property type="entry name" value="HMG_box_2"/>
    <property type="match status" value="1"/>
</dbReference>
<dbReference type="PRINTS" id="PR00886">
    <property type="entry name" value="HIGHMOBLTY12"/>
</dbReference>
<dbReference type="SMART" id="SM00398">
    <property type="entry name" value="HMG"/>
    <property type="match status" value="2"/>
</dbReference>
<dbReference type="SUPFAM" id="SSF47095">
    <property type="entry name" value="HMG-box"/>
    <property type="match status" value="2"/>
</dbReference>
<dbReference type="PROSITE" id="PS00353">
    <property type="entry name" value="HMG_BOX_1"/>
    <property type="match status" value="1"/>
</dbReference>
<dbReference type="PROSITE" id="PS50118">
    <property type="entry name" value="HMG_BOX_2"/>
    <property type="match status" value="2"/>
</dbReference>
<proteinExistence type="inferred from homology"/>
<keyword id="KW-0007">Acetylation</keyword>
<keyword id="KW-1064">Adaptive immunity</keyword>
<keyword id="KW-0013">ADP-ribosylation</keyword>
<keyword id="KW-0072">Autophagy</keyword>
<keyword id="KW-1003">Cell membrane</keyword>
<keyword id="KW-0145">Chemotaxis</keyword>
<keyword id="KW-0158">Chromosome</keyword>
<keyword id="KW-0963">Cytoplasm</keyword>
<keyword id="KW-1015">Disulfide bond</keyword>
<keyword id="KW-0227">DNA damage</keyword>
<keyword id="KW-0233">DNA recombination</keyword>
<keyword id="KW-0234">DNA repair</keyword>
<keyword id="KW-0238">DNA-binding</keyword>
<keyword id="KW-0967">Endosome</keyword>
<keyword id="KW-0391">Immunity</keyword>
<keyword id="KW-0395">Inflammatory response</keyword>
<keyword id="KW-0399">Innate immunity</keyword>
<keyword id="KW-1017">Isopeptide bond</keyword>
<keyword id="KW-0472">Membrane</keyword>
<keyword id="KW-0539">Nucleus</keyword>
<keyword id="KW-0558">Oxidation</keyword>
<keyword id="KW-0597">Phosphoprotein</keyword>
<keyword id="KW-1185">Reference proteome</keyword>
<keyword id="KW-0677">Repeat</keyword>
<keyword id="KW-0964">Secreted</keyword>